<protein>
    <recommendedName>
        <fullName evidence="1">NAD(P)H-quinone oxidoreductase subunit H, chloroplastic</fullName>
        <ecNumber evidence="1">7.1.1.-</ecNumber>
    </recommendedName>
    <alternativeName>
        <fullName>NAD(P)H dehydrogenase subunit H</fullName>
    </alternativeName>
    <alternativeName>
        <fullName evidence="1">NADH-plastoquinone oxidoreductase 49 kDa subunit</fullName>
    </alternativeName>
    <alternativeName>
        <fullName evidence="1">NADH-plastoquinone oxidoreductase subunit H</fullName>
    </alternativeName>
</protein>
<name>NDHH_LOBMA</name>
<geneLocation type="chloroplast"/>
<gene>
    <name evidence="1" type="primary">ndhH</name>
</gene>
<reference key="1">
    <citation type="submission" date="2007-03" db="EMBL/GenBank/DDBJ databases">
        <title>Sequencing analysis of Lobularia maritima chloroplast DNA.</title>
        <authorList>
            <person name="Hosouchi T."/>
            <person name="Tsuruoka H."/>
            <person name="Kotani H."/>
        </authorList>
    </citation>
    <scope>NUCLEOTIDE SEQUENCE [LARGE SCALE GENOMIC DNA]</scope>
</reference>
<proteinExistence type="inferred from homology"/>
<comment type="function">
    <text evidence="1">NDH shuttles electrons from NAD(P)H:plastoquinone, via FMN and iron-sulfur (Fe-S) centers, to quinones in the photosynthetic chain and possibly in a chloroplast respiratory chain. The immediate electron acceptor for the enzyme in this species is believed to be plastoquinone. Couples the redox reaction to proton translocation, and thus conserves the redox energy in a proton gradient.</text>
</comment>
<comment type="catalytic activity">
    <reaction evidence="1">
        <text>a plastoquinone + NADH + (n+1) H(+)(in) = a plastoquinol + NAD(+) + n H(+)(out)</text>
        <dbReference type="Rhea" id="RHEA:42608"/>
        <dbReference type="Rhea" id="RHEA-COMP:9561"/>
        <dbReference type="Rhea" id="RHEA-COMP:9562"/>
        <dbReference type="ChEBI" id="CHEBI:15378"/>
        <dbReference type="ChEBI" id="CHEBI:17757"/>
        <dbReference type="ChEBI" id="CHEBI:57540"/>
        <dbReference type="ChEBI" id="CHEBI:57945"/>
        <dbReference type="ChEBI" id="CHEBI:62192"/>
    </reaction>
</comment>
<comment type="catalytic activity">
    <reaction evidence="1">
        <text>a plastoquinone + NADPH + (n+1) H(+)(in) = a plastoquinol + NADP(+) + n H(+)(out)</text>
        <dbReference type="Rhea" id="RHEA:42612"/>
        <dbReference type="Rhea" id="RHEA-COMP:9561"/>
        <dbReference type="Rhea" id="RHEA-COMP:9562"/>
        <dbReference type="ChEBI" id="CHEBI:15378"/>
        <dbReference type="ChEBI" id="CHEBI:17757"/>
        <dbReference type="ChEBI" id="CHEBI:57783"/>
        <dbReference type="ChEBI" id="CHEBI:58349"/>
        <dbReference type="ChEBI" id="CHEBI:62192"/>
    </reaction>
</comment>
<comment type="subunit">
    <text evidence="1">NDH is composed of at least 16 different subunits, 5 of which are encoded in the nucleus.</text>
</comment>
<comment type="subcellular location">
    <subcellularLocation>
        <location evidence="1">Plastid</location>
        <location evidence="1">Chloroplast thylakoid membrane</location>
        <topology evidence="1">Peripheral membrane protein</topology>
        <orientation evidence="1">Stromal side</orientation>
    </subcellularLocation>
</comment>
<comment type="similarity">
    <text evidence="1">Belongs to the complex I 49 kDa subunit family.</text>
</comment>
<accession>A4QLQ3</accession>
<organism>
    <name type="scientific">Lobularia maritima</name>
    <name type="common">Sweet alyssum</name>
    <name type="synonym">Alyssum maritimum</name>
    <dbReference type="NCBI Taxonomy" id="226051"/>
    <lineage>
        <taxon>Eukaryota</taxon>
        <taxon>Viridiplantae</taxon>
        <taxon>Streptophyta</taxon>
        <taxon>Embryophyta</taxon>
        <taxon>Tracheophyta</taxon>
        <taxon>Spermatophyta</taxon>
        <taxon>Magnoliopsida</taxon>
        <taxon>eudicotyledons</taxon>
        <taxon>Gunneridae</taxon>
        <taxon>Pentapetalae</taxon>
        <taxon>rosids</taxon>
        <taxon>malvids</taxon>
        <taxon>Brassicales</taxon>
        <taxon>Brassicaceae</taxon>
        <taxon>Anastaticeae</taxon>
        <taxon>Lobularia</taxon>
    </lineage>
</organism>
<evidence type="ECO:0000255" key="1">
    <source>
        <dbReference type="HAMAP-Rule" id="MF_01358"/>
    </source>
</evidence>
<sequence>MTRPVTGKDLMIVNMGPHHPSMHGVLRLIVTLDGEDVVDCEPILGYLHRGMEKIAENRAIIQYLPYVTRWDYLATMFTEAITVNGPEQLGNIQVPKRASYIRVIMLELSRIASHLLWLGPFMADIGAQTPFFYIFREREFVYDLFEAATGMRMMHNFFRIGGIAADLPYGWIDKCLDFCDYFLTEVVEYQKLITRNPIFLERVEGVGIIGGEEAINWGLSGPMLRASGIPWDLRKVDRYESYDEFEWEIQWQKQGDSLARYLVRLSEMTESIKIIQQALEGLPGGPYENLESRGFDRKRNPEWNDFEYRFISKKPSPTFELSKQELYVRVEAPKGELGIFLIGDQSGFPWRWKIRPPGFINLQILPELVKRMKLADIMTILGSIDIIMGEVDR</sequence>
<dbReference type="EC" id="7.1.1.-" evidence="1"/>
<dbReference type="EMBL" id="AP009375">
    <property type="protein sequence ID" value="BAF50608.1"/>
    <property type="molecule type" value="Genomic_DNA"/>
</dbReference>
<dbReference type="RefSeq" id="YP_001123783.1">
    <property type="nucleotide sequence ID" value="NC_009274.1"/>
</dbReference>
<dbReference type="SMR" id="A4QLQ3"/>
<dbReference type="GeneID" id="4964804"/>
<dbReference type="GO" id="GO:0009535">
    <property type="term" value="C:chloroplast thylakoid membrane"/>
    <property type="evidence" value="ECO:0007669"/>
    <property type="project" value="UniProtKB-SubCell"/>
</dbReference>
<dbReference type="GO" id="GO:0051287">
    <property type="term" value="F:NAD binding"/>
    <property type="evidence" value="ECO:0007669"/>
    <property type="project" value="InterPro"/>
</dbReference>
<dbReference type="GO" id="GO:0016655">
    <property type="term" value="F:oxidoreductase activity, acting on NAD(P)H, quinone or similar compound as acceptor"/>
    <property type="evidence" value="ECO:0007669"/>
    <property type="project" value="UniProtKB-UniRule"/>
</dbReference>
<dbReference type="GO" id="GO:0048038">
    <property type="term" value="F:quinone binding"/>
    <property type="evidence" value="ECO:0007669"/>
    <property type="project" value="UniProtKB-KW"/>
</dbReference>
<dbReference type="GO" id="GO:0019684">
    <property type="term" value="P:photosynthesis, light reaction"/>
    <property type="evidence" value="ECO:0007669"/>
    <property type="project" value="UniProtKB-UniRule"/>
</dbReference>
<dbReference type="FunFam" id="1.10.645.10:FF:000003">
    <property type="entry name" value="NAD(P)H-quinone oxidoreductase subunit H, chloroplastic"/>
    <property type="match status" value="1"/>
</dbReference>
<dbReference type="Gene3D" id="1.10.645.10">
    <property type="entry name" value="Cytochrome-c3 Hydrogenase, chain B"/>
    <property type="match status" value="1"/>
</dbReference>
<dbReference type="HAMAP" id="MF_01358">
    <property type="entry name" value="NDH1_NuoD"/>
    <property type="match status" value="1"/>
</dbReference>
<dbReference type="InterPro" id="IPR001135">
    <property type="entry name" value="NADH_Q_OxRdtase_suD"/>
</dbReference>
<dbReference type="InterPro" id="IPR014029">
    <property type="entry name" value="NADH_UbQ_OxRdtase_49kDa_CS"/>
</dbReference>
<dbReference type="InterPro" id="IPR022885">
    <property type="entry name" value="NDH1_su_D/H"/>
</dbReference>
<dbReference type="InterPro" id="IPR029014">
    <property type="entry name" value="NiFe-Hase_large"/>
</dbReference>
<dbReference type="NCBIfam" id="NF004739">
    <property type="entry name" value="PRK06075.1"/>
    <property type="match status" value="1"/>
</dbReference>
<dbReference type="NCBIfam" id="NF005649">
    <property type="entry name" value="PRK07415.1"/>
    <property type="match status" value="1"/>
</dbReference>
<dbReference type="PANTHER" id="PTHR11993:SF10">
    <property type="entry name" value="NADH DEHYDROGENASE [UBIQUINONE] IRON-SULFUR PROTEIN 2, MITOCHONDRIAL"/>
    <property type="match status" value="1"/>
</dbReference>
<dbReference type="PANTHER" id="PTHR11993">
    <property type="entry name" value="NADH-UBIQUINONE OXIDOREDUCTASE 49 KDA SUBUNIT"/>
    <property type="match status" value="1"/>
</dbReference>
<dbReference type="Pfam" id="PF00346">
    <property type="entry name" value="Complex1_49kDa"/>
    <property type="match status" value="1"/>
</dbReference>
<dbReference type="SUPFAM" id="SSF56762">
    <property type="entry name" value="HydB/Nqo4-like"/>
    <property type="match status" value="1"/>
</dbReference>
<dbReference type="PROSITE" id="PS00535">
    <property type="entry name" value="COMPLEX1_49K"/>
    <property type="match status" value="1"/>
</dbReference>
<feature type="chain" id="PRO_0000358002" description="NAD(P)H-quinone oxidoreductase subunit H, chloroplastic">
    <location>
        <begin position="1"/>
        <end position="393"/>
    </location>
</feature>
<keyword id="KW-0150">Chloroplast</keyword>
<keyword id="KW-0472">Membrane</keyword>
<keyword id="KW-0520">NAD</keyword>
<keyword id="KW-0521">NADP</keyword>
<keyword id="KW-0934">Plastid</keyword>
<keyword id="KW-0618">Plastoquinone</keyword>
<keyword id="KW-0874">Quinone</keyword>
<keyword id="KW-0793">Thylakoid</keyword>
<keyword id="KW-1278">Translocase</keyword>
<keyword id="KW-0813">Transport</keyword>